<accession>Q63961</accession>
<accession>Q61520</accession>
<accession>Q8K100</accession>
<gene>
    <name type="primary">Eng</name>
    <name type="synonym">Edg</name>
</gene>
<proteinExistence type="evidence at protein level"/>
<name>EGLN_MOUSE</name>
<feature type="signal peptide" evidence="2">
    <location>
        <begin position="1"/>
        <end position="26"/>
    </location>
</feature>
<feature type="chain" id="PRO_0000021157" description="Endoglin">
    <location>
        <begin position="27"/>
        <end position="653"/>
    </location>
</feature>
<feature type="topological domain" description="Extracellular" evidence="2">
    <location>
        <begin position="27"/>
        <end position="581"/>
    </location>
</feature>
<feature type="transmembrane region" description="Helical" evidence="2">
    <location>
        <begin position="582"/>
        <end position="606"/>
    </location>
</feature>
<feature type="topological domain" description="Cytoplasmic" evidence="2">
    <location>
        <begin position="607"/>
        <end position="653"/>
    </location>
</feature>
<feature type="domain" description="ZP" evidence="3">
    <location>
        <begin position="363"/>
        <end position="510"/>
    </location>
</feature>
<feature type="region of interest" description="Required for interaction with GDF2" evidence="1">
    <location>
        <begin position="27"/>
        <end position="337"/>
    </location>
</feature>
<feature type="region of interest" description="OR1, N-terminal part" evidence="1">
    <location>
        <begin position="27"/>
        <end position="47"/>
    </location>
</feature>
<feature type="region of interest" description="OR2" evidence="1">
    <location>
        <begin position="48"/>
        <end position="201"/>
    </location>
</feature>
<feature type="region of interest" description="OR1, C-terminal part" evidence="1">
    <location>
        <begin position="202"/>
        <end position="330"/>
    </location>
</feature>
<feature type="region of interest" description="Essential for interaction with GDF2" evidence="1">
    <location>
        <begin position="270"/>
        <end position="282"/>
    </location>
</feature>
<feature type="region of interest" description="Disordered" evidence="4">
    <location>
        <begin position="624"/>
        <end position="653"/>
    </location>
</feature>
<feature type="compositionally biased region" description="Low complexity" evidence="4">
    <location>
        <begin position="624"/>
        <end position="634"/>
    </location>
</feature>
<feature type="compositionally biased region" description="Polar residues" evidence="4">
    <location>
        <begin position="635"/>
        <end position="653"/>
    </location>
</feature>
<feature type="modified residue" description="Phosphoserine; by TGFBR1" evidence="7">
    <location>
        <position position="641"/>
    </location>
</feature>
<feature type="modified residue" description="Phosphoserine; by TGFBR1" evidence="7">
    <location>
        <position position="644"/>
    </location>
</feature>
<feature type="glycosylation site" description="N-linked (GlcNAc...) asparagine" evidence="2">
    <location>
        <position position="89"/>
    </location>
</feature>
<feature type="glycosylation site" description="N-linked (GlcNAc...) asparagine" evidence="2">
    <location>
        <position position="135"/>
    </location>
</feature>
<feature type="glycosylation site" description="N-linked (GlcNAc...) asparagine" evidence="2">
    <location>
        <position position="266"/>
    </location>
</feature>
<feature type="glycosylation site" description="N-linked (GlcNAc...) asparagine" evidence="2">
    <location>
        <position position="307"/>
    </location>
</feature>
<feature type="glycosylation site" description="N-linked (GlcNAc...) asparagine" evidence="2">
    <location>
        <position position="322"/>
    </location>
</feature>
<feature type="disulfide bond" evidence="1">
    <location>
        <begin position="31"/>
        <end position="209"/>
    </location>
</feature>
<feature type="disulfide bond" evidence="1">
    <location>
        <begin position="54"/>
        <end position="184"/>
    </location>
</feature>
<feature type="disulfide bond" evidence="1">
    <location>
        <begin position="244"/>
        <end position="330"/>
    </location>
</feature>
<feature type="disulfide bond" evidence="1">
    <location>
        <begin position="350"/>
        <end position="382"/>
    </location>
</feature>
<feature type="disulfide bond" evidence="1">
    <location>
        <begin position="363"/>
        <end position="442"/>
    </location>
</feature>
<feature type="disulfide bond" evidence="1">
    <location>
        <begin position="394"/>
        <end position="412"/>
    </location>
</feature>
<feature type="disulfide bond" evidence="1">
    <location>
        <begin position="493"/>
        <end position="549"/>
    </location>
</feature>
<feature type="disulfide bond" description="Interchain" evidence="1">
    <location>
        <position position="516"/>
    </location>
</feature>
<feature type="sequence conflict" description="In Ref. 2; CAA54917." evidence="13" ref="2">
    <original>Q</original>
    <variation>R</variation>
    <location>
        <position position="94"/>
    </location>
</feature>
<feature type="sequence conflict" description="In Ref. 1; AAB30196." evidence="13" ref="1">
    <original>V</original>
    <variation>D</variation>
    <location>
        <position position="287"/>
    </location>
</feature>
<feature type="sequence conflict" description="In Ref. 2; CAA54917." evidence="13" ref="2">
    <original>I</original>
    <variation>V</variation>
    <location>
        <position position="572"/>
    </location>
</feature>
<reference key="1">
    <citation type="journal article" date="1994" name="Gene">
        <title>Cloning and expression of a cDNA encoding mouse endoglin, an endothelial cell TGF-beta ligand.</title>
        <authorList>
            <person name="Ge A.Z."/>
            <person name="Butcher E.C."/>
        </authorList>
    </citation>
    <scope>NUCLEOTIDE SEQUENCE [MRNA]</scope>
    <scope>SUBCELLULAR LOCATION</scope>
    <source>
        <tissue>Brain</tissue>
    </source>
</reference>
<reference key="2">
    <citation type="journal article" date="1994" name="Endocrinology">
        <title>Molecular characterization and in situ localization of murine endoglin reveal that it is a transforming growth factor-beta binding protein of endothelial and stromal cells.</title>
        <authorList>
            <person name="St Jacques S."/>
            <person name="Cymerman U."/>
            <person name="Pece N."/>
            <person name="Letarte M."/>
        </authorList>
    </citation>
    <scope>NUCLEOTIDE SEQUENCE [MRNA]</scope>
    <scope>TISSUE SPECIFICITY</scope>
    <scope>SUBUNIT</scope>
    <scope>INTERACTION WITH TGFB1</scope>
    <source>
        <strain>CD-1</strain>
        <tissue>Placenta</tissue>
    </source>
</reference>
<reference key="3">
    <citation type="journal article" date="2009" name="PLoS Biol.">
        <title>Lineage-specific biology revealed by a finished genome assembly of the mouse.</title>
        <authorList>
            <person name="Church D.M."/>
            <person name="Goodstadt L."/>
            <person name="Hillier L.W."/>
            <person name="Zody M.C."/>
            <person name="Goldstein S."/>
            <person name="She X."/>
            <person name="Bult C.J."/>
            <person name="Agarwala R."/>
            <person name="Cherry J.L."/>
            <person name="DiCuccio M."/>
            <person name="Hlavina W."/>
            <person name="Kapustin Y."/>
            <person name="Meric P."/>
            <person name="Maglott D."/>
            <person name="Birtle Z."/>
            <person name="Marques A.C."/>
            <person name="Graves T."/>
            <person name="Zhou S."/>
            <person name="Teague B."/>
            <person name="Potamousis K."/>
            <person name="Churas C."/>
            <person name="Place M."/>
            <person name="Herschleb J."/>
            <person name="Runnheim R."/>
            <person name="Forrest D."/>
            <person name="Amos-Landgraf J."/>
            <person name="Schwartz D.C."/>
            <person name="Cheng Z."/>
            <person name="Lindblad-Toh K."/>
            <person name="Eichler E.E."/>
            <person name="Ponting C.P."/>
        </authorList>
    </citation>
    <scope>NUCLEOTIDE SEQUENCE [LARGE SCALE GENOMIC DNA]</scope>
    <source>
        <strain>C57BL/6J</strain>
    </source>
</reference>
<reference key="4">
    <citation type="submission" date="2005-07" db="EMBL/GenBank/DDBJ databases">
        <authorList>
            <person name="Mural R.J."/>
            <person name="Adams M.D."/>
            <person name="Myers E.W."/>
            <person name="Smith H.O."/>
            <person name="Venter J.C."/>
        </authorList>
    </citation>
    <scope>NUCLEOTIDE SEQUENCE [LARGE SCALE GENOMIC DNA]</scope>
</reference>
<reference key="5">
    <citation type="journal article" date="2004" name="Genome Res.">
        <title>The status, quality, and expansion of the NIH full-length cDNA project: the Mammalian Gene Collection (MGC).</title>
        <authorList>
            <consortium name="The MGC Project Team"/>
        </authorList>
    </citation>
    <scope>NUCLEOTIDE SEQUENCE [LARGE SCALE MRNA]</scope>
    <source>
        <strain>FVB/N</strain>
        <tissue>Salivary gland</tissue>
    </source>
</reference>
<reference key="6">
    <citation type="journal article" date="2007" name="J. Biol. Chem.">
        <title>The interaction of endoglin with beta-arrestin2 regulates transforming growth factor-beta-mediated ERK activation and migration in endothelial cells.</title>
        <authorList>
            <person name="Lee N.Y."/>
            <person name="Blobe G.C."/>
        </authorList>
    </citation>
    <scope>FUNCTION</scope>
</reference>
<reference key="7">
    <citation type="journal article" date="2000" name="Dev. Biol.">
        <title>Endoglin, an ancillary TGFbeta receptor, is required for extraembryonic angiogenesis and plays a key role in heart development.</title>
        <authorList>
            <person name="Arthur H.M."/>
            <person name="Ure J."/>
            <person name="Smith A.J."/>
            <person name="Renforth G."/>
            <person name="Wilson D.I."/>
            <person name="Torsney E."/>
            <person name="Charlton R."/>
            <person name="Parums D.V."/>
            <person name="Jowett T."/>
            <person name="Marchuk D.A."/>
            <person name="Burn J."/>
            <person name="Diamond A.G."/>
        </authorList>
    </citation>
    <scope>FUNCTION</scope>
    <scope>DISRUPTION PHENOTYPE</scope>
    <scope>DEVELOPMENTAL STAGE</scope>
    <scope>TISSUE SPECIFICITY</scope>
</reference>
<reference key="8">
    <citation type="journal article" date="2010" name="Carcinogenesis">
        <title>ALK5 phosphorylation of the endoglin cytoplasmic domain regulates Smad1/5/8 signaling and endothelial cell migration.</title>
        <authorList>
            <person name="Ray B.N."/>
            <person name="Lee N.Y."/>
            <person name="How T."/>
            <person name="Blobe G.C."/>
        </authorList>
    </citation>
    <scope>PHOSPHORYLATION AT SER-641 AND SER-644</scope>
</reference>
<reference key="9">
    <citation type="journal article" date="2010" name="Cell">
        <title>A tissue-specific atlas of mouse protein phosphorylation and expression.</title>
        <authorList>
            <person name="Huttlin E.L."/>
            <person name="Jedrychowski M.P."/>
            <person name="Elias J.E."/>
            <person name="Goswami T."/>
            <person name="Rad R."/>
            <person name="Beausoleil S.A."/>
            <person name="Villen J."/>
            <person name="Haas W."/>
            <person name="Sowa M.E."/>
            <person name="Gygi S.P."/>
        </authorList>
    </citation>
    <scope>IDENTIFICATION BY MASS SPECTROMETRY [LARGE SCALE ANALYSIS]</scope>
    <source>
        <tissue>Heart</tissue>
        <tissue>Kidney</tissue>
        <tissue>Lung</tissue>
        <tissue>Pancreas</tissue>
        <tissue>Spleen</tissue>
    </source>
</reference>
<reference key="10">
    <citation type="journal article" date="2011" name="J. Biol. Chem.">
        <title>Soluble endoglin specifically binds bone morphogenetic proteins 9 and 10 via its orphan domain, inhibits blood vessel formation, and suppresses tumor growth.</title>
        <authorList>
            <person name="Castonguay R."/>
            <person name="Werner E.D."/>
            <person name="Matthews R.G."/>
            <person name="Presman E."/>
            <person name="Mulivor A.W."/>
            <person name="Solban N."/>
            <person name="Sako D."/>
            <person name="Pearsall R.S."/>
            <person name="Underwood K.W."/>
            <person name="Seehra J."/>
            <person name="Kumar R."/>
            <person name="Grinberg A.V."/>
        </authorList>
    </citation>
    <scope>FUNCTION</scope>
    <scope>INTERACTION WITH GDF2 AND BMP10</scope>
</reference>
<reference key="11">
    <citation type="journal article" date="2012" name="PLoS ONE">
        <title>Endoglin requirement for BMP9 signaling in endothelial cells reveals new mechanism of action for selective anti-endoglin antibodies.</title>
        <authorList>
            <person name="Nolan-Stevaux O."/>
            <person name="Zhong W."/>
            <person name="Culp S."/>
            <person name="Shaffer K."/>
            <person name="Hoover J."/>
            <person name="Wickramasinghe D."/>
            <person name="Ruefli-Brasse A."/>
        </authorList>
    </citation>
    <scope>FUNCTION</scope>
</reference>
<reference key="12">
    <citation type="journal article" date="2017" name="Nat. Cell Biol.">
        <title>Endoglin controls blood vessel diameter through endothelial cell shape changes in response to haemodynamic cues.</title>
        <authorList>
            <person name="Sugden W.W."/>
            <person name="Meissner R."/>
            <person name="Aegerter-Wilmsen T."/>
            <person name="Tsaryk R."/>
            <person name="Leonard E.V."/>
            <person name="Bussmann J."/>
            <person name="Hamm M.J."/>
            <person name="Herzog W."/>
            <person name="Jin Y."/>
            <person name="Jakobsson L."/>
            <person name="Denz C."/>
            <person name="Siekmann A.F."/>
        </authorList>
    </citation>
    <scope>FUNCTION</scope>
</reference>
<protein>
    <recommendedName>
        <fullName>Endoglin</fullName>
    </recommendedName>
    <alternativeName>
        <fullName>Cell surface MJ7/18 antigen</fullName>
    </alternativeName>
    <cdAntigenName evidence="12">CD105</cdAntigenName>
</protein>
<organism>
    <name type="scientific">Mus musculus</name>
    <name type="common">Mouse</name>
    <dbReference type="NCBI Taxonomy" id="10090"/>
    <lineage>
        <taxon>Eukaryota</taxon>
        <taxon>Metazoa</taxon>
        <taxon>Chordata</taxon>
        <taxon>Craniata</taxon>
        <taxon>Vertebrata</taxon>
        <taxon>Euteleostomi</taxon>
        <taxon>Mammalia</taxon>
        <taxon>Eutheria</taxon>
        <taxon>Euarchontoglires</taxon>
        <taxon>Glires</taxon>
        <taxon>Rodentia</taxon>
        <taxon>Myomorpha</taxon>
        <taxon>Muroidea</taxon>
        <taxon>Muridae</taxon>
        <taxon>Murinae</taxon>
        <taxon>Mus</taxon>
        <taxon>Mus</taxon>
    </lineage>
</organism>
<comment type="function">
    <text evidence="1 5 6 8 9">Vascular endothelium glycoprotein that plays an important role in the regulation of angiogenesis (PubMed:10625534). Required for normal structure and integrity of adult vasculature (By similarity). Regulates the migration of vascular endothelial cells (PubMed:17540773). Required for normal extraembryonic angiogenesis and for embryonic heart development (PubMed:10625534). May regulate endothelial cell shape changes in response to blood flow, which drive vascular remodeling and establishment of normal vascular morphology during angiogenesis (PubMed:28530658). May play a role in the binding of endothelial cells to integrins. Acts as a TGF-beta coreceptor and is involved in the TGF-beta/BMP signaling cascade that ultimately leads to the activation of SMAD transcription factors (PubMed:23300529). Required for GDF2/BMP9 signaling through SMAD1 in endothelial cells and modulates TGFB1 signaling through SMAD3 (By similarity).</text>
</comment>
<comment type="subunit">
    <text evidence="1 11">Homodimer; disulfide-linked (PubMed:8194490). Forms a heteromeric complex with the signaling receptors for transforming growth factor-beta: TGFBR1 and/or TGFBR2. Interacts with TGFB1 (PubMed:8194490). It is able to bind TGFB1 and TGFB2 with high affinity, but not TGFB3. Interacts with GDF2, forming a heterotetramer with a 2:2 stoichiometry. Interacts with ACVRL1. Can form a heteromeric complex with GDF2 and ACVRL1. Interacts with BMP10. Interacts with DYNLT4. Interacts with ARRB2.</text>
</comment>
<comment type="subcellular location">
    <subcellularLocation>
        <location evidence="10">Cell membrane</location>
        <topology evidence="14">Single-pass type I membrane protein</topology>
    </subcellularLocation>
</comment>
<comment type="tissue specificity">
    <text evidence="11">Detected on blood vessels (at protein level) (PubMed:8194490). Detected on adult pulmonary artery, capillaries supporting the heart muscle and lung alveolar capillary endothelial cells (PubMed:10625534). Endoglin is restricted to endothelial cells in all tissues except bone marrow and is also found in stromal cells within the connective tissue of intestine, stomach, heart, skeletal muscle, uterus, ovary, oviduct, testis and thymus (PubMed:8194490).</text>
</comment>
<comment type="developmental stage">
    <text evidence="5">Detected in embryo (at protein level). Detected in endothelium from yolk sac vessels.</text>
</comment>
<comment type="domain">
    <text evidence="1">The ZP domain mediates dimerization.</text>
</comment>
<comment type="domain">
    <text evidence="1">The N-terminal OR region is composed of two intertwined domains (OR1 and OR2) with a common, novel fold. Each contains 12 beta-strands that form a parallel beta-helix-like structure, plus a single alpha-helix. The OR1 region mediates interaction with GDF2.</text>
</comment>
<comment type="disruption phenotype">
    <text evidence="5">Full embryonic lethality at about 10.5 dpc. At 9.5 dpc, embryos display abnormal yolk sac vasculature and yolk sac anemia. Mutant embryos are also anemic, probably due to defective hematopoiesis in the yolk sac. In contrast, the embryonic vasculature appears grossly normal in most cases, but heart development is abnormal, and nearly all mutant embryos had enlarged ventricles and dilated outflow tracts. Besides, many had abnormal cardiac looping and displayed pericardial effusion. Heterozygous mice have occasionally abnormally convoluted and dilated blood vessels with disorganized smooth muscle cells surrounding them; these blood vessels are very fragile and rupture easily.</text>
</comment>
<comment type="miscellaneous">
    <text evidence="13">Lacks a RGD motif, contrary to the human protein.</text>
</comment>
<dbReference type="EMBL" id="S69407">
    <property type="protein sequence ID" value="AAB30196.1"/>
    <property type="molecule type" value="mRNA"/>
</dbReference>
<dbReference type="EMBL" id="X77952">
    <property type="protein sequence ID" value="CAA54917.1"/>
    <property type="molecule type" value="mRNA"/>
</dbReference>
<dbReference type="EMBL" id="AL772271">
    <property type="status" value="NOT_ANNOTATED_CDS"/>
    <property type="molecule type" value="Genomic_DNA"/>
</dbReference>
<dbReference type="EMBL" id="CH466542">
    <property type="protein sequence ID" value="EDL08562.1"/>
    <property type="molecule type" value="Genomic_DNA"/>
</dbReference>
<dbReference type="EMBL" id="BC029080">
    <property type="protein sequence ID" value="AAH29080.1"/>
    <property type="molecule type" value="mRNA"/>
</dbReference>
<dbReference type="CCDS" id="CCDS15925.1"/>
<dbReference type="PIR" id="I48341">
    <property type="entry name" value="I48341"/>
</dbReference>
<dbReference type="RefSeq" id="NP_031958.2">
    <property type="nucleotide sequence ID" value="NM_007932.2"/>
</dbReference>
<dbReference type="SMR" id="Q63961"/>
<dbReference type="BioGRID" id="199450">
    <property type="interactions" value="34"/>
</dbReference>
<dbReference type="DIP" id="DIP-47636N"/>
<dbReference type="FunCoup" id="Q63961">
    <property type="interactions" value="97"/>
</dbReference>
<dbReference type="IntAct" id="Q63961">
    <property type="interactions" value="6"/>
</dbReference>
<dbReference type="MINT" id="Q63961"/>
<dbReference type="STRING" id="10090.ENSMUSP00000009705"/>
<dbReference type="GlyCosmos" id="Q63961">
    <property type="glycosylation" value="5 sites, No reported glycans"/>
</dbReference>
<dbReference type="GlyGen" id="Q63961">
    <property type="glycosylation" value="7 sites, 3 N-linked glycans (3 sites)"/>
</dbReference>
<dbReference type="iPTMnet" id="Q63961"/>
<dbReference type="PhosphoSitePlus" id="Q63961"/>
<dbReference type="jPOST" id="Q63961"/>
<dbReference type="PaxDb" id="10090-ENSMUSP00000009705"/>
<dbReference type="ProteomicsDB" id="277565"/>
<dbReference type="Antibodypedia" id="2321">
    <property type="antibodies" value="2535 antibodies from 54 providers"/>
</dbReference>
<dbReference type="DNASU" id="13805"/>
<dbReference type="Ensembl" id="ENSMUST00000009705.14">
    <property type="protein sequence ID" value="ENSMUSP00000009705.8"/>
    <property type="gene ID" value="ENSMUSG00000026814.17"/>
</dbReference>
<dbReference type="GeneID" id="13805"/>
<dbReference type="KEGG" id="mmu:13805"/>
<dbReference type="UCSC" id="uc008jgk.2">
    <property type="organism name" value="mouse"/>
</dbReference>
<dbReference type="AGR" id="MGI:95392"/>
<dbReference type="CTD" id="2022"/>
<dbReference type="MGI" id="MGI:95392">
    <property type="gene designation" value="Eng"/>
</dbReference>
<dbReference type="VEuPathDB" id="HostDB:ENSMUSG00000026814"/>
<dbReference type="eggNOG" id="ENOG502RZQ9">
    <property type="taxonomic scope" value="Eukaryota"/>
</dbReference>
<dbReference type="GeneTree" id="ENSGT00530000063861"/>
<dbReference type="InParanoid" id="Q63961"/>
<dbReference type="OMA" id="QCEIPRE"/>
<dbReference type="OrthoDB" id="10072329at2759"/>
<dbReference type="PhylomeDB" id="Q63961"/>
<dbReference type="TreeFam" id="TF337375"/>
<dbReference type="BioGRID-ORCS" id="13805">
    <property type="hits" value="4 hits in 82 CRISPR screens"/>
</dbReference>
<dbReference type="ChiTaRS" id="Eng">
    <property type="organism name" value="mouse"/>
</dbReference>
<dbReference type="PRO" id="PR:Q63961"/>
<dbReference type="Proteomes" id="UP000000589">
    <property type="component" value="Chromosome 2"/>
</dbReference>
<dbReference type="RNAct" id="Q63961">
    <property type="molecule type" value="protein"/>
</dbReference>
<dbReference type="Bgee" id="ENSMUSG00000026814">
    <property type="expression patterns" value="Expressed in gonadal fat pad and 257 other cell types or tissues"/>
</dbReference>
<dbReference type="ExpressionAtlas" id="Q63961">
    <property type="expression patterns" value="baseline and differential"/>
</dbReference>
<dbReference type="GO" id="GO:0072563">
    <property type="term" value="C:endothelial microparticle"/>
    <property type="evidence" value="ECO:0000314"/>
    <property type="project" value="BHF-UCL"/>
</dbReference>
<dbReference type="GO" id="GO:0009897">
    <property type="term" value="C:external side of plasma membrane"/>
    <property type="evidence" value="ECO:0007669"/>
    <property type="project" value="Ensembl"/>
</dbReference>
<dbReference type="GO" id="GO:0016604">
    <property type="term" value="C:nuclear body"/>
    <property type="evidence" value="ECO:0007669"/>
    <property type="project" value="Ensembl"/>
</dbReference>
<dbReference type="GO" id="GO:0043235">
    <property type="term" value="C:receptor complex"/>
    <property type="evidence" value="ECO:0007669"/>
    <property type="project" value="Ensembl"/>
</dbReference>
<dbReference type="GO" id="GO:0036122">
    <property type="term" value="F:BMP binding"/>
    <property type="evidence" value="ECO:0007669"/>
    <property type="project" value="Ensembl"/>
</dbReference>
<dbReference type="GO" id="GO:0015026">
    <property type="term" value="F:coreceptor activity"/>
    <property type="evidence" value="ECO:0007669"/>
    <property type="project" value="Ensembl"/>
</dbReference>
<dbReference type="GO" id="GO:0005534">
    <property type="term" value="F:galactose binding"/>
    <property type="evidence" value="ECO:0007669"/>
    <property type="project" value="Ensembl"/>
</dbReference>
<dbReference type="GO" id="GO:0005539">
    <property type="term" value="F:glycosaminoglycan binding"/>
    <property type="evidence" value="ECO:0007669"/>
    <property type="project" value="Ensembl"/>
</dbReference>
<dbReference type="GO" id="GO:0042803">
    <property type="term" value="F:protein homodimerization activity"/>
    <property type="evidence" value="ECO:0000353"/>
    <property type="project" value="BHF-UCL"/>
</dbReference>
<dbReference type="GO" id="GO:0030546">
    <property type="term" value="F:signaling receptor activator activity"/>
    <property type="evidence" value="ECO:0007669"/>
    <property type="project" value="Ensembl"/>
</dbReference>
<dbReference type="GO" id="GO:0050431">
    <property type="term" value="F:transforming growth factor beta binding"/>
    <property type="evidence" value="ECO:0000314"/>
    <property type="project" value="BHF-UCL"/>
</dbReference>
<dbReference type="GO" id="GO:0034713">
    <property type="term" value="F:type I transforming growth factor beta receptor binding"/>
    <property type="evidence" value="ECO:0007669"/>
    <property type="project" value="Ensembl"/>
</dbReference>
<dbReference type="GO" id="GO:0005114">
    <property type="term" value="F:type II transforming growth factor beta receptor binding"/>
    <property type="evidence" value="ECO:0007669"/>
    <property type="project" value="Ensembl"/>
</dbReference>
<dbReference type="GO" id="GO:0001525">
    <property type="term" value="P:angiogenesis"/>
    <property type="evidence" value="ECO:0000315"/>
    <property type="project" value="MGI"/>
</dbReference>
<dbReference type="GO" id="GO:0048844">
    <property type="term" value="P:artery morphogenesis"/>
    <property type="evidence" value="ECO:0000315"/>
    <property type="project" value="BHF-UCL"/>
</dbReference>
<dbReference type="GO" id="GO:0055009">
    <property type="term" value="P:atrial cardiac muscle tissue morphogenesis"/>
    <property type="evidence" value="ECO:0000315"/>
    <property type="project" value="BHF-UCL"/>
</dbReference>
<dbReference type="GO" id="GO:1905222">
    <property type="term" value="P:atrioventricular canal morphogenesis"/>
    <property type="evidence" value="ECO:0000315"/>
    <property type="project" value="BHF-UCL"/>
</dbReference>
<dbReference type="GO" id="GO:0001569">
    <property type="term" value="P:branching involved in blood vessel morphogenesis"/>
    <property type="evidence" value="ECO:0000315"/>
    <property type="project" value="BHF-UCL"/>
</dbReference>
<dbReference type="GO" id="GO:0003209">
    <property type="term" value="P:cardiac atrium morphogenesis"/>
    <property type="evidence" value="ECO:0000315"/>
    <property type="project" value="BHF-UCL"/>
</dbReference>
<dbReference type="GO" id="GO:0003208">
    <property type="term" value="P:cardiac ventricle morphogenesis"/>
    <property type="evidence" value="ECO:0000315"/>
    <property type="project" value="BHF-UCL"/>
</dbReference>
<dbReference type="GO" id="GO:0007155">
    <property type="term" value="P:cell adhesion"/>
    <property type="evidence" value="ECO:0007669"/>
    <property type="project" value="UniProtKB-KW"/>
</dbReference>
<dbReference type="GO" id="GO:0003273">
    <property type="term" value="P:cell migration involved in endocardial cushion formation"/>
    <property type="evidence" value="ECO:0000315"/>
    <property type="project" value="MGI"/>
</dbReference>
<dbReference type="GO" id="GO:0022009">
    <property type="term" value="P:central nervous system vasculogenesis"/>
    <property type="evidence" value="ECO:0007669"/>
    <property type="project" value="Ensembl"/>
</dbReference>
<dbReference type="GO" id="GO:0035912">
    <property type="term" value="P:dorsal aorta morphogenesis"/>
    <property type="evidence" value="ECO:0000315"/>
    <property type="project" value="BHF-UCL"/>
</dbReference>
<dbReference type="GO" id="GO:0003203">
    <property type="term" value="P:endocardial cushion morphogenesis"/>
    <property type="evidence" value="ECO:0000315"/>
    <property type="project" value="BHF-UCL"/>
</dbReference>
<dbReference type="GO" id="GO:0003198">
    <property type="term" value="P:epithelial to mesenchymal transition involved in endocardial cushion formation"/>
    <property type="evidence" value="ECO:0000315"/>
    <property type="project" value="BHF-UCL"/>
</dbReference>
<dbReference type="GO" id="GO:0007507">
    <property type="term" value="P:heart development"/>
    <property type="evidence" value="ECO:0000315"/>
    <property type="project" value="MGI"/>
</dbReference>
<dbReference type="GO" id="GO:0001947">
    <property type="term" value="P:heart looping"/>
    <property type="evidence" value="ECO:0000315"/>
    <property type="project" value="BHF-UCL"/>
</dbReference>
<dbReference type="GO" id="GO:0030336">
    <property type="term" value="P:negative regulation of cell migration"/>
    <property type="evidence" value="ECO:0007669"/>
    <property type="project" value="Ensembl"/>
</dbReference>
<dbReference type="GO" id="GO:0010629">
    <property type="term" value="P:negative regulation of gene expression"/>
    <property type="evidence" value="ECO:0000315"/>
    <property type="project" value="BHF-UCL"/>
</dbReference>
<dbReference type="GO" id="GO:0003148">
    <property type="term" value="P:outflow tract septum morphogenesis"/>
    <property type="evidence" value="ECO:0000316"/>
    <property type="project" value="BHF-UCL"/>
</dbReference>
<dbReference type="GO" id="GO:0045766">
    <property type="term" value="P:positive regulation of angiogenesis"/>
    <property type="evidence" value="ECO:0000316"/>
    <property type="project" value="MGI"/>
</dbReference>
<dbReference type="GO" id="GO:0030513">
    <property type="term" value="P:positive regulation of BMP signaling pathway"/>
    <property type="evidence" value="ECO:0007669"/>
    <property type="project" value="Ensembl"/>
</dbReference>
<dbReference type="GO" id="GO:1905007">
    <property type="term" value="P:positive regulation of epithelial to mesenchymal transition involved in endocardial cushion formation"/>
    <property type="evidence" value="ECO:0000315"/>
    <property type="project" value="BHF-UCL"/>
</dbReference>
<dbReference type="GO" id="GO:0051897">
    <property type="term" value="P:positive regulation of phosphatidylinositol 3-kinase/protein kinase B signal transduction"/>
    <property type="evidence" value="ECO:0007669"/>
    <property type="project" value="Ensembl"/>
</dbReference>
<dbReference type="GO" id="GO:0060391">
    <property type="term" value="P:positive regulation of SMAD protein signal transduction"/>
    <property type="evidence" value="ECO:0007669"/>
    <property type="project" value="Ensembl"/>
</dbReference>
<dbReference type="GO" id="GO:0045944">
    <property type="term" value="P:positive regulation of transcription by RNA polymerase II"/>
    <property type="evidence" value="ECO:0000315"/>
    <property type="project" value="BHF-UCL"/>
</dbReference>
<dbReference type="GO" id="GO:1905065">
    <property type="term" value="P:positive regulation of vascular associated smooth muscle cell differentiation"/>
    <property type="evidence" value="ECO:0000315"/>
    <property type="project" value="BHF-UCL"/>
</dbReference>
<dbReference type="GO" id="GO:0017015">
    <property type="term" value="P:regulation of transforming growth factor beta receptor signaling pathway"/>
    <property type="evidence" value="ECO:0000304"/>
    <property type="project" value="MGI"/>
</dbReference>
<dbReference type="GO" id="GO:0048745">
    <property type="term" value="P:smooth muscle tissue development"/>
    <property type="evidence" value="ECO:0000315"/>
    <property type="project" value="BHF-UCL"/>
</dbReference>
<dbReference type="GO" id="GO:0007179">
    <property type="term" value="P:transforming growth factor beta receptor signaling pathway"/>
    <property type="evidence" value="ECO:0000305"/>
    <property type="project" value="BHF-UCL"/>
</dbReference>
<dbReference type="GO" id="GO:0097084">
    <property type="term" value="P:vascular associated smooth muscle cell development"/>
    <property type="evidence" value="ECO:0000315"/>
    <property type="project" value="BHF-UCL"/>
</dbReference>
<dbReference type="GO" id="GO:0001570">
    <property type="term" value="P:vasculogenesis"/>
    <property type="evidence" value="ECO:0000315"/>
    <property type="project" value="BHF-UCL"/>
</dbReference>
<dbReference type="GO" id="GO:0048845">
    <property type="term" value="P:venous blood vessel morphogenesis"/>
    <property type="evidence" value="ECO:0000315"/>
    <property type="project" value="BHF-UCL"/>
</dbReference>
<dbReference type="GO" id="GO:0003222">
    <property type="term" value="P:ventricular trabecula myocardium morphogenesis"/>
    <property type="evidence" value="ECO:0000315"/>
    <property type="project" value="BHF-UCL"/>
</dbReference>
<dbReference type="PANTHER" id="PTHR14002:SF1">
    <property type="entry name" value="ENDOGLIN"/>
    <property type="match status" value="1"/>
</dbReference>
<dbReference type="PANTHER" id="PTHR14002">
    <property type="entry name" value="ENDOGLIN/TGF-BETA RECEPTOR TYPE III"/>
    <property type="match status" value="1"/>
</dbReference>
<sequence>MDRGVLPLPITLLFVIYSFVPTTGLAERVGCDLQPVDPTRGEVTFTTSQVSEGCVAQAANAVREVHVLFLDFPGMLSHLELTLQASKQNGTETQEVFLVLVSNKNVFVKFQAPEIPLHLAYDSSLVIFQGQPRVNITVLPSLTSRKQILDWAATKGAITSIAALDDPQSIVLQLGQDPKAPFLCLPEAHKDMGATLEWQPRAQTPVQSCRLEGVSGHKEAYILRILPGSEAGPRTVTVMMELSCTSGDAILILHGPPYVSWFIDINHSMQILTTGEYSVKIFPGSKVKGVELPDTPQGLIAEARKLNASIVTSFVELPLVSNVSLRASSCGGVFQTTPAPVVTTPPKDTCSPVLLMSLIQPKCGNQVMTLALNKKHVQTLQCTITGLTFWDSSCQAEDTDDHLVLSSAYSSCGMKVTAHVVSNEVIISFPSGSPPLRKKVQCIDMDSLSFQLGLYLSPHFLQASNTIELGQQAFVQVSVSPLTSEVTVQLDSCHLDLGPEGDMVELIQSRTAKGSCVTLLSPSPEGDPRFSFLLRVYMVPTPTAGTLSCNLALRPSTLSQEVYKTVSMRLNIVSPDLSGKGLVLPSVLGITFGAFLIGALLTAALWYIYSHTRGPSKREPVVAVAAPASSESSSTNHSIGSTQSTPCSTSSMA</sequence>
<keyword id="KW-0037">Angiogenesis</keyword>
<keyword id="KW-0130">Cell adhesion</keyword>
<keyword id="KW-1003">Cell membrane</keyword>
<keyword id="KW-1015">Disulfide bond</keyword>
<keyword id="KW-0325">Glycoprotein</keyword>
<keyword id="KW-0472">Membrane</keyword>
<keyword id="KW-0597">Phosphoprotein</keyword>
<keyword id="KW-1185">Reference proteome</keyword>
<keyword id="KW-0732">Signal</keyword>
<keyword id="KW-0812">Transmembrane</keyword>
<keyword id="KW-1133">Transmembrane helix</keyword>
<evidence type="ECO:0000250" key="1">
    <source>
        <dbReference type="UniProtKB" id="P17813"/>
    </source>
</evidence>
<evidence type="ECO:0000255" key="2"/>
<evidence type="ECO:0000255" key="3">
    <source>
        <dbReference type="PROSITE-ProRule" id="PRU00375"/>
    </source>
</evidence>
<evidence type="ECO:0000256" key="4">
    <source>
        <dbReference type="SAM" id="MobiDB-lite"/>
    </source>
</evidence>
<evidence type="ECO:0000269" key="5">
    <source>
    </source>
</evidence>
<evidence type="ECO:0000269" key="6">
    <source>
    </source>
</evidence>
<evidence type="ECO:0000269" key="7">
    <source>
    </source>
</evidence>
<evidence type="ECO:0000269" key="8">
    <source>
    </source>
</evidence>
<evidence type="ECO:0000269" key="9">
    <source>
    </source>
</evidence>
<evidence type="ECO:0000269" key="10">
    <source>
    </source>
</evidence>
<evidence type="ECO:0000269" key="11">
    <source>
    </source>
</evidence>
<evidence type="ECO:0000303" key="12">
    <source>
    </source>
</evidence>
<evidence type="ECO:0000305" key="13"/>
<evidence type="ECO:0000305" key="14">
    <source>
    </source>
</evidence>